<organism>
    <name type="scientific">Rubrivivax gelatinosus</name>
    <name type="common">Rhodocyclus gelatinosus</name>
    <name type="synonym">Rhodopseudomonas gelatinosa</name>
    <dbReference type="NCBI Taxonomy" id="28068"/>
    <lineage>
        <taxon>Bacteria</taxon>
        <taxon>Pseudomonadati</taxon>
        <taxon>Pseudomonadota</taxon>
        <taxon>Betaproteobacteria</taxon>
        <taxon>Burkholderiales</taxon>
        <taxon>Sphaerotilaceae</taxon>
        <taxon>Rubrivivax</taxon>
    </lineage>
</organism>
<dbReference type="EMBL" id="AH012710">
    <property type="protein sequence ID" value="AAO93121.1"/>
    <property type="molecule type" value="Genomic_DNA"/>
</dbReference>
<dbReference type="PIR" id="S66179">
    <property type="entry name" value="S66179"/>
</dbReference>
<dbReference type="PIR" id="S66181">
    <property type="entry name" value="S66181"/>
</dbReference>
<dbReference type="SMR" id="P0DJO0"/>
<dbReference type="GO" id="GO:0019866">
    <property type="term" value="C:organelle inner membrane"/>
    <property type="evidence" value="ECO:0007669"/>
    <property type="project" value="InterPro"/>
</dbReference>
<dbReference type="GO" id="GO:0005886">
    <property type="term" value="C:plasma membrane"/>
    <property type="evidence" value="ECO:0007669"/>
    <property type="project" value="UniProtKB-SubCell"/>
</dbReference>
<dbReference type="GO" id="GO:0030077">
    <property type="term" value="C:plasma membrane light-harvesting complex"/>
    <property type="evidence" value="ECO:0007669"/>
    <property type="project" value="InterPro"/>
</dbReference>
<dbReference type="GO" id="GO:0042314">
    <property type="term" value="F:bacteriochlorophyll binding"/>
    <property type="evidence" value="ECO:0007669"/>
    <property type="project" value="UniProtKB-KW"/>
</dbReference>
<dbReference type="GO" id="GO:0045156">
    <property type="term" value="F:electron transporter, transferring electrons within the cyclic electron transport pathway of photosynthesis activity"/>
    <property type="evidence" value="ECO:0007669"/>
    <property type="project" value="InterPro"/>
</dbReference>
<dbReference type="GO" id="GO:0046872">
    <property type="term" value="F:metal ion binding"/>
    <property type="evidence" value="ECO:0007669"/>
    <property type="project" value="UniProtKB-KW"/>
</dbReference>
<dbReference type="GO" id="GO:0019684">
    <property type="term" value="P:photosynthesis, light reaction"/>
    <property type="evidence" value="ECO:0007669"/>
    <property type="project" value="InterPro"/>
</dbReference>
<dbReference type="Gene3D" id="4.10.220.20">
    <property type="entry name" value="Light-harvesting complex"/>
    <property type="match status" value="1"/>
</dbReference>
<dbReference type="InterPro" id="IPR000066">
    <property type="entry name" value="Antenna_a/b"/>
</dbReference>
<dbReference type="InterPro" id="IPR018332">
    <property type="entry name" value="Antenna_alpha"/>
</dbReference>
<dbReference type="InterPro" id="IPR002361">
    <property type="entry name" value="Antenna_alpha_CS"/>
</dbReference>
<dbReference type="InterPro" id="IPR035889">
    <property type="entry name" value="Light-harvesting_complex"/>
</dbReference>
<dbReference type="NCBIfam" id="NF040861">
    <property type="entry name" value="pufA_517_ASD"/>
    <property type="match status" value="1"/>
</dbReference>
<dbReference type="Pfam" id="PF00556">
    <property type="entry name" value="LHC"/>
    <property type="match status" value="1"/>
</dbReference>
<dbReference type="PRINTS" id="PR00673">
    <property type="entry name" value="LIGHTHARVSTA"/>
</dbReference>
<dbReference type="SUPFAM" id="SSF56918">
    <property type="entry name" value="Light-harvesting complex subunits"/>
    <property type="match status" value="1"/>
</dbReference>
<dbReference type="PROSITE" id="PS00968">
    <property type="entry name" value="ANTENNA_COMP_ALPHA"/>
    <property type="match status" value="1"/>
</dbReference>
<comment type="function">
    <text>Antenna complexes are light-harvesting systems, which transfer the excitation energy to the reaction centers.</text>
</comment>
<comment type="subunit">
    <text evidence="1">An alpha/beta heterodimer. The core complex is formed by different alpha and beta chains, binding bacteriochlorophyll molecules, and arranged most probably in tetrameric structures disposed around the reaction center. The non-pigmented gamma chains may constitute additional components (By similarity).</text>
</comment>
<comment type="subcellular location">
    <subcellularLocation>
        <location>Cell inner membrane</location>
        <topology>Single-pass type II membrane protein</topology>
    </subcellularLocation>
</comment>
<comment type="PTM">
    <text>The N-terminus is blocked.</text>
</comment>
<comment type="similarity">
    <text evidence="4">Belongs to the antenna complex alpha subunit family.</text>
</comment>
<proteinExistence type="evidence at protein level"/>
<reference key="1">
    <citation type="journal article" date="1995" name="FEBS Lett.">
        <title>A new mutation in the pufL gene responsible for the terbutryn resistance phenotype in Rubrivivax gelatinosus.</title>
        <authorList>
            <person name="Ouchane S."/>
            <person name="Picaud M."/>
            <person name="Astier C."/>
        </authorList>
    </citation>
    <scope>NUCLEOTIDE SEQUENCE [GENOMIC DNA]</scope>
    <source>
        <strain>S1</strain>
    </source>
</reference>
<reference key="2">
    <citation type="journal article" date="1994" name="Eur. J. Biochem.">
        <title>Structural and spectral characterisation of the antenna complexes of Rhodocyclus gelatinosus. Indications of a hairpin-like-arranged antenna apoprotein with an unusually high alanine content.</title>
        <authorList>
            <person name="Brunisholz R.A."/>
            <person name="Suter F."/>
            <person name="Zuber H."/>
        </authorList>
    </citation>
    <scope>PROTEIN SEQUENCE OF 1-52</scope>
    <scope>FORMYLATION AT MET-1</scope>
    <scope>SUBUNIT STRUCTURE</scope>
    <source>
        <strain>DSM 149 / LMG 4308 / 2150</strain>
        <strain>DSM 151 / LMG 4306 / Dr 2</strain>
    </source>
</reference>
<sequence>MWRIWRLFDPMRAMVAQAVFLLGLAVLIHLMLLGTNKYNWLDGAKKAPAATAVAPVPAEVTSLAQAK</sequence>
<gene>
    <name type="primary">pufA</name>
</gene>
<evidence type="ECO:0000250" key="1"/>
<evidence type="ECO:0000255" key="2"/>
<evidence type="ECO:0000269" key="3">
    <source>
    </source>
</evidence>
<evidence type="ECO:0000305" key="4"/>
<feature type="chain" id="PRO_0000099792" description="Light-harvesting protein B-870 alpha chain">
    <location>
        <begin position="1"/>
        <end position="67"/>
    </location>
</feature>
<feature type="topological domain" description="Cytoplasmic" evidence="2">
    <location>
        <begin position="1"/>
        <end position="12"/>
    </location>
</feature>
<feature type="transmembrane region" description="Helical" evidence="2">
    <location>
        <begin position="13"/>
        <end position="33"/>
    </location>
</feature>
<feature type="topological domain" description="Periplasmic" evidence="2">
    <location>
        <begin position="34"/>
        <end position="67"/>
    </location>
</feature>
<feature type="binding site" description="axial binding residue" evidence="2">
    <location>
        <position position="29"/>
    </location>
    <ligand>
        <name>a bacteriochlorophyll</name>
        <dbReference type="ChEBI" id="CHEBI:38201"/>
    </ligand>
    <ligandPart>
        <name>Mg</name>
        <dbReference type="ChEBI" id="CHEBI:25107"/>
    </ligandPart>
</feature>
<feature type="modified residue" description="N-formylmethionine; in strain DSM 149 and DSM 151" evidence="3">
    <location>
        <position position="1"/>
    </location>
</feature>
<feature type="sequence variant" description="In strain: DSM 149.">
    <original>Y</original>
    <variation>F</variation>
    <location>
        <position position="38"/>
    </location>
</feature>
<feature type="sequence variant" description="In strain: DSM 151.">
    <original>L</original>
    <variation>M</variation>
    <location>
        <position position="41"/>
    </location>
</feature>
<feature type="sequence variant" description="In strain: DSM 149.">
    <original>A</original>
    <variation>V</variation>
    <location>
        <position position="49"/>
    </location>
</feature>
<feature type="sequence variant" description="In strain: DSM 149.">
    <original>T</original>
    <variation>S</variation>
    <location>
        <position position="51"/>
    </location>
</feature>
<accession>P0DJO0</accession>
<accession>P51756</accession>
<accession>P95615</accession>
<name>LHA1_RUBGE</name>
<keyword id="KW-0042">Antenna complex</keyword>
<keyword id="KW-0076">Bacteriochlorophyll</keyword>
<keyword id="KW-0997">Cell inner membrane</keyword>
<keyword id="KW-1003">Cell membrane</keyword>
<keyword id="KW-0148">Chlorophyll</keyword>
<keyword id="KW-0157">Chromophore</keyword>
<keyword id="KW-0903">Direct protein sequencing</keyword>
<keyword id="KW-0291">Formylation</keyword>
<keyword id="KW-0437">Light-harvesting polypeptide</keyword>
<keyword id="KW-0460">Magnesium</keyword>
<keyword id="KW-0472">Membrane</keyword>
<keyword id="KW-0479">Metal-binding</keyword>
<keyword id="KW-0812">Transmembrane</keyword>
<keyword id="KW-1133">Transmembrane helix</keyword>
<protein>
    <recommendedName>
        <fullName>Light-harvesting protein B-870 alpha chain</fullName>
    </recommendedName>
    <alternativeName>
        <fullName>Antenna pigment protein alpha chain</fullName>
    </alternativeName>
    <alternativeName>
        <fullName>Light-harvesting protein B-875 alpha chain</fullName>
    </alternativeName>
</protein>